<keyword id="KW-0067">ATP-binding</keyword>
<keyword id="KW-0131">Cell cycle</keyword>
<keyword id="KW-0132">Cell division</keyword>
<keyword id="KW-0227">DNA damage</keyword>
<keyword id="KW-0233">DNA recombination</keyword>
<keyword id="KW-0234">DNA repair</keyword>
<keyword id="KW-0235">DNA replication</keyword>
<keyword id="KW-0436">Ligase</keyword>
<keyword id="KW-0460">Magnesium</keyword>
<keyword id="KW-0479">Metal-binding</keyword>
<keyword id="KW-0547">Nucleotide-binding</keyword>
<keyword id="KW-1185">Reference proteome</keyword>
<name>DNLI_PERMH</name>
<gene>
    <name evidence="1" type="primary">lig</name>
    <name type="ordered locus">PERMA_1901</name>
</gene>
<proteinExistence type="inferred from homology"/>
<organism>
    <name type="scientific">Persephonella marina (strain DSM 14350 / EX-H1)</name>
    <dbReference type="NCBI Taxonomy" id="123214"/>
    <lineage>
        <taxon>Bacteria</taxon>
        <taxon>Pseudomonadati</taxon>
        <taxon>Aquificota</taxon>
        <taxon>Aquificia</taxon>
        <taxon>Aquificales</taxon>
        <taxon>Hydrogenothermaceae</taxon>
        <taxon>Persephonella</taxon>
    </lineage>
</organism>
<dbReference type="EC" id="6.5.1.1" evidence="1"/>
<dbReference type="EMBL" id="CP001230">
    <property type="protein sequence ID" value="ACO03229.1"/>
    <property type="molecule type" value="Genomic_DNA"/>
</dbReference>
<dbReference type="RefSeq" id="WP_012675468.1">
    <property type="nucleotide sequence ID" value="NC_012440.1"/>
</dbReference>
<dbReference type="SMR" id="C0QSL7"/>
<dbReference type="STRING" id="123214.PERMA_1901"/>
<dbReference type="PaxDb" id="123214-PERMA_1901"/>
<dbReference type="KEGG" id="pmx:PERMA_1901"/>
<dbReference type="eggNOG" id="COG1793">
    <property type="taxonomic scope" value="Bacteria"/>
</dbReference>
<dbReference type="HOGENOM" id="CLU_005138_6_0_0"/>
<dbReference type="OrthoDB" id="9802472at2"/>
<dbReference type="Proteomes" id="UP000001366">
    <property type="component" value="Chromosome"/>
</dbReference>
<dbReference type="GO" id="GO:0005524">
    <property type="term" value="F:ATP binding"/>
    <property type="evidence" value="ECO:0007669"/>
    <property type="project" value="UniProtKB-UniRule"/>
</dbReference>
<dbReference type="GO" id="GO:0003677">
    <property type="term" value="F:DNA binding"/>
    <property type="evidence" value="ECO:0007669"/>
    <property type="project" value="InterPro"/>
</dbReference>
<dbReference type="GO" id="GO:0003910">
    <property type="term" value="F:DNA ligase (ATP) activity"/>
    <property type="evidence" value="ECO:0007669"/>
    <property type="project" value="UniProtKB-UniRule"/>
</dbReference>
<dbReference type="GO" id="GO:0046872">
    <property type="term" value="F:metal ion binding"/>
    <property type="evidence" value="ECO:0007669"/>
    <property type="project" value="UniProtKB-KW"/>
</dbReference>
<dbReference type="GO" id="GO:0051301">
    <property type="term" value="P:cell division"/>
    <property type="evidence" value="ECO:0007669"/>
    <property type="project" value="UniProtKB-KW"/>
</dbReference>
<dbReference type="GO" id="GO:0071897">
    <property type="term" value="P:DNA biosynthetic process"/>
    <property type="evidence" value="ECO:0007669"/>
    <property type="project" value="InterPro"/>
</dbReference>
<dbReference type="GO" id="GO:0006310">
    <property type="term" value="P:DNA recombination"/>
    <property type="evidence" value="ECO:0007669"/>
    <property type="project" value="UniProtKB-UniRule"/>
</dbReference>
<dbReference type="GO" id="GO:0006281">
    <property type="term" value="P:DNA repair"/>
    <property type="evidence" value="ECO:0007669"/>
    <property type="project" value="UniProtKB-UniRule"/>
</dbReference>
<dbReference type="GO" id="GO:0006273">
    <property type="term" value="P:lagging strand elongation"/>
    <property type="evidence" value="ECO:0007669"/>
    <property type="project" value="TreeGrafter"/>
</dbReference>
<dbReference type="CDD" id="cd07901">
    <property type="entry name" value="Adenylation_DNA_ligase_Arch_LigB"/>
    <property type="match status" value="1"/>
</dbReference>
<dbReference type="CDD" id="cd07969">
    <property type="entry name" value="OBF_DNA_ligase_I"/>
    <property type="match status" value="1"/>
</dbReference>
<dbReference type="FunFam" id="1.10.3260.10:FF:000007">
    <property type="entry name" value="DNA ligase"/>
    <property type="match status" value="1"/>
</dbReference>
<dbReference type="FunFam" id="2.40.50.140:FF:000062">
    <property type="entry name" value="DNA ligase"/>
    <property type="match status" value="1"/>
</dbReference>
<dbReference type="Gene3D" id="1.10.3260.10">
    <property type="entry name" value="DNA ligase, ATP-dependent, N-terminal domain"/>
    <property type="match status" value="1"/>
</dbReference>
<dbReference type="Gene3D" id="3.30.470.30">
    <property type="entry name" value="DNA ligase/mRNA capping enzyme"/>
    <property type="match status" value="1"/>
</dbReference>
<dbReference type="Gene3D" id="2.40.50.140">
    <property type="entry name" value="Nucleic acid-binding proteins"/>
    <property type="match status" value="1"/>
</dbReference>
<dbReference type="HAMAP" id="MF_00407">
    <property type="entry name" value="DNA_ligase"/>
    <property type="match status" value="1"/>
</dbReference>
<dbReference type="InterPro" id="IPR050191">
    <property type="entry name" value="ATP-dep_DNA_ligase"/>
</dbReference>
<dbReference type="InterPro" id="IPR022865">
    <property type="entry name" value="DNA_ligae_ATP-dep_bac/arc"/>
</dbReference>
<dbReference type="InterPro" id="IPR000977">
    <property type="entry name" value="DNA_ligase_ATP-dep"/>
</dbReference>
<dbReference type="InterPro" id="IPR012309">
    <property type="entry name" value="DNA_ligase_ATP-dep_C"/>
</dbReference>
<dbReference type="InterPro" id="IPR012310">
    <property type="entry name" value="DNA_ligase_ATP-dep_cent"/>
</dbReference>
<dbReference type="InterPro" id="IPR016059">
    <property type="entry name" value="DNA_ligase_ATP-dep_CS"/>
</dbReference>
<dbReference type="InterPro" id="IPR012308">
    <property type="entry name" value="DNA_ligase_ATP-dep_N"/>
</dbReference>
<dbReference type="InterPro" id="IPR036599">
    <property type="entry name" value="DNA_ligase_N_sf"/>
</dbReference>
<dbReference type="InterPro" id="IPR012340">
    <property type="entry name" value="NA-bd_OB-fold"/>
</dbReference>
<dbReference type="NCBIfam" id="TIGR00574">
    <property type="entry name" value="dnl1"/>
    <property type="match status" value="1"/>
</dbReference>
<dbReference type="PANTHER" id="PTHR45674:SF4">
    <property type="entry name" value="DNA LIGASE 1"/>
    <property type="match status" value="1"/>
</dbReference>
<dbReference type="PANTHER" id="PTHR45674">
    <property type="entry name" value="DNA LIGASE 1/3 FAMILY MEMBER"/>
    <property type="match status" value="1"/>
</dbReference>
<dbReference type="Pfam" id="PF04679">
    <property type="entry name" value="DNA_ligase_A_C"/>
    <property type="match status" value="1"/>
</dbReference>
<dbReference type="Pfam" id="PF01068">
    <property type="entry name" value="DNA_ligase_A_M"/>
    <property type="match status" value="1"/>
</dbReference>
<dbReference type="Pfam" id="PF04675">
    <property type="entry name" value="DNA_ligase_A_N"/>
    <property type="match status" value="1"/>
</dbReference>
<dbReference type="SUPFAM" id="SSF117018">
    <property type="entry name" value="ATP-dependent DNA ligase DNA-binding domain"/>
    <property type="match status" value="1"/>
</dbReference>
<dbReference type="SUPFAM" id="SSF56091">
    <property type="entry name" value="DNA ligase/mRNA capping enzyme, catalytic domain"/>
    <property type="match status" value="1"/>
</dbReference>
<dbReference type="SUPFAM" id="SSF50249">
    <property type="entry name" value="Nucleic acid-binding proteins"/>
    <property type="match status" value="1"/>
</dbReference>
<dbReference type="PROSITE" id="PS00697">
    <property type="entry name" value="DNA_LIGASE_A1"/>
    <property type="match status" value="1"/>
</dbReference>
<dbReference type="PROSITE" id="PS50160">
    <property type="entry name" value="DNA_LIGASE_A3"/>
    <property type="match status" value="1"/>
</dbReference>
<evidence type="ECO:0000255" key="1">
    <source>
        <dbReference type="HAMAP-Rule" id="MF_00407"/>
    </source>
</evidence>
<protein>
    <recommendedName>
        <fullName evidence="1">Probable DNA ligase</fullName>
        <ecNumber evidence="1">6.5.1.1</ecNumber>
    </recommendedName>
    <alternativeName>
        <fullName evidence="1">Polydeoxyribonucleotide synthase [ATP]</fullName>
    </alternativeName>
</protein>
<feature type="chain" id="PRO_1000134730" description="Probable DNA ligase">
    <location>
        <begin position="1"/>
        <end position="582"/>
    </location>
</feature>
<feature type="active site" description="N6-AMP-lysine intermediate" evidence="1">
    <location>
        <position position="250"/>
    </location>
</feature>
<feature type="binding site" evidence="1">
    <location>
        <position position="248"/>
    </location>
    <ligand>
        <name>ATP</name>
        <dbReference type="ChEBI" id="CHEBI:30616"/>
    </ligand>
</feature>
<feature type="binding site" evidence="1">
    <location>
        <position position="255"/>
    </location>
    <ligand>
        <name>ATP</name>
        <dbReference type="ChEBI" id="CHEBI:30616"/>
    </ligand>
</feature>
<feature type="binding site" evidence="1">
    <location>
        <position position="270"/>
    </location>
    <ligand>
        <name>ATP</name>
        <dbReference type="ChEBI" id="CHEBI:30616"/>
    </ligand>
</feature>
<feature type="binding site" evidence="1">
    <location>
        <position position="299"/>
    </location>
    <ligand>
        <name>ATP</name>
        <dbReference type="ChEBI" id="CHEBI:30616"/>
    </ligand>
</feature>
<feature type="binding site" evidence="1">
    <location>
        <position position="339"/>
    </location>
    <ligand>
        <name>ATP</name>
        <dbReference type="ChEBI" id="CHEBI:30616"/>
    </ligand>
</feature>
<feature type="binding site" evidence="1">
    <location>
        <position position="416"/>
    </location>
    <ligand>
        <name>ATP</name>
        <dbReference type="ChEBI" id="CHEBI:30616"/>
    </ligand>
</feature>
<feature type="binding site" evidence="1">
    <location>
        <position position="422"/>
    </location>
    <ligand>
        <name>ATP</name>
        <dbReference type="ChEBI" id="CHEBI:30616"/>
    </ligand>
</feature>
<accession>C0QSL7</accession>
<sequence>MEYTKLAQLYQILEETTSRIKMTQALVDLFKETPPELIDKVVYLSIGRIAPEYTGLDYNFSEKSAIKALSTVLNISEHDIQHQVLQTGDLGDAGKKLYEEKGVKPEGILTVEEVYRTLREIAQTTGYGSTKKKLQLFTELLKKASPLEVKYLLRTITERLRLGIGDNTIMDALSIAFTGKKENREIIERAYNISSDLGYVARILAEKGLDAVKNIKIEIGRPIRPMLAERMAIPSYILKKLGGKAGAEYKYDGERIQVHRKGDTFYLFSRRLENITDQFPDLIEFLKESIPEECIIELEAVVIDPSSGAIRPFQDLMNRRVKYVTRFHIMMYPIAGFIFDIMYLNGEDLTLKPYPERRKILEENIKITERINLSERKIVDNVEDLESFFHQAIEDGCEGLVCKSLQKDSIYQAGKRGFLWIKYKRDYKSHLADTLDLVVVGAFYGKGARTGYFGSLLMACYDPETDQFKTVCKVGTGFKEDDFKKLDDLLKEHTLDHKHPRVNSILSADIWYEPFLVLEITGAELTLSPVHTCGWDRIKINRGLGLRFPRFTGRYRFDKRPEDATTEEEIINMYKNQIQIKS</sequence>
<reference key="1">
    <citation type="journal article" date="2009" name="J. Bacteriol.">
        <title>Complete and draft genome sequences of six members of the Aquificales.</title>
        <authorList>
            <person name="Reysenbach A.-L."/>
            <person name="Hamamura N."/>
            <person name="Podar M."/>
            <person name="Griffiths E."/>
            <person name="Ferreira S."/>
            <person name="Hochstein R."/>
            <person name="Heidelberg J."/>
            <person name="Johnson J."/>
            <person name="Mead D."/>
            <person name="Pohorille A."/>
            <person name="Sarmiento M."/>
            <person name="Schweighofer K."/>
            <person name="Seshadri R."/>
            <person name="Voytek M.A."/>
        </authorList>
    </citation>
    <scope>NUCLEOTIDE SEQUENCE [LARGE SCALE GENOMIC DNA]</scope>
    <source>
        <strain>DSM 14350 / EX-H1</strain>
    </source>
</reference>
<comment type="function">
    <text evidence="1">DNA ligase that seals nicks in double-stranded DNA during DNA replication, DNA recombination and DNA repair.</text>
</comment>
<comment type="catalytic activity">
    <reaction evidence="1">
        <text>ATP + (deoxyribonucleotide)n-3'-hydroxyl + 5'-phospho-(deoxyribonucleotide)m = (deoxyribonucleotide)n+m + AMP + diphosphate.</text>
        <dbReference type="EC" id="6.5.1.1"/>
    </reaction>
</comment>
<comment type="cofactor">
    <cofactor evidence="1">
        <name>Mg(2+)</name>
        <dbReference type="ChEBI" id="CHEBI:18420"/>
    </cofactor>
</comment>
<comment type="similarity">
    <text evidence="1">Belongs to the ATP-dependent DNA ligase family.</text>
</comment>